<feature type="chain" id="PRO_1000132949" description="Molybdenum cofactor guanylyltransferase">
    <location>
        <begin position="1"/>
        <end position="209"/>
    </location>
</feature>
<feature type="binding site" evidence="1">
    <location>
        <begin position="13"/>
        <end position="15"/>
    </location>
    <ligand>
        <name>GTP</name>
        <dbReference type="ChEBI" id="CHEBI:37565"/>
    </ligand>
</feature>
<feature type="binding site" evidence="1">
    <location>
        <position position="26"/>
    </location>
    <ligand>
        <name>GTP</name>
        <dbReference type="ChEBI" id="CHEBI:37565"/>
    </ligand>
</feature>
<feature type="binding site" evidence="1">
    <location>
        <position position="54"/>
    </location>
    <ligand>
        <name>GTP</name>
        <dbReference type="ChEBI" id="CHEBI:37565"/>
    </ligand>
</feature>
<feature type="binding site" evidence="1">
    <location>
        <position position="74"/>
    </location>
    <ligand>
        <name>GTP</name>
        <dbReference type="ChEBI" id="CHEBI:37565"/>
    </ligand>
</feature>
<feature type="binding site" evidence="1">
    <location>
        <position position="104"/>
    </location>
    <ligand>
        <name>GTP</name>
        <dbReference type="ChEBI" id="CHEBI:37565"/>
    </ligand>
</feature>
<feature type="binding site" evidence="1">
    <location>
        <position position="104"/>
    </location>
    <ligand>
        <name>Mg(2+)</name>
        <dbReference type="ChEBI" id="CHEBI:18420"/>
    </ligand>
</feature>
<organism>
    <name type="scientific">Acinetobacter baumannii (strain ACICU)</name>
    <dbReference type="NCBI Taxonomy" id="405416"/>
    <lineage>
        <taxon>Bacteria</taxon>
        <taxon>Pseudomonadati</taxon>
        <taxon>Pseudomonadota</taxon>
        <taxon>Gammaproteobacteria</taxon>
        <taxon>Moraxellales</taxon>
        <taxon>Moraxellaceae</taxon>
        <taxon>Acinetobacter</taxon>
        <taxon>Acinetobacter calcoaceticus/baumannii complex</taxon>
    </lineage>
</organism>
<gene>
    <name evidence="1" type="primary">mobA</name>
    <name type="ordered locus">ACICU_02127</name>
</gene>
<protein>
    <recommendedName>
        <fullName evidence="1">Molybdenum cofactor guanylyltransferase</fullName>
        <shortName evidence="1">MoCo guanylyltransferase</shortName>
        <ecNumber evidence="1">2.7.7.77</ecNumber>
    </recommendedName>
    <alternativeName>
        <fullName evidence="1">GTP:molybdopterin guanylyltransferase</fullName>
    </alternativeName>
    <alternativeName>
        <fullName evidence="1">Mo-MPT guanylyltransferase</fullName>
    </alternativeName>
    <alternativeName>
        <fullName evidence="1">Molybdopterin guanylyltransferase</fullName>
    </alternativeName>
    <alternativeName>
        <fullName evidence="1">Molybdopterin-guanine dinucleotide synthase</fullName>
        <shortName evidence="1">MGD synthase</shortName>
    </alternativeName>
</protein>
<reference key="1">
    <citation type="journal article" date="2008" name="Antimicrob. Agents Chemother.">
        <title>Whole-genome pyrosequencing of an epidemic multidrug-resistant Acinetobacter baumannii strain belonging to the European clone II group.</title>
        <authorList>
            <person name="Iacono M."/>
            <person name="Villa L."/>
            <person name="Fortini D."/>
            <person name="Bordoni R."/>
            <person name="Imperi F."/>
            <person name="Bonnal R.J."/>
            <person name="Sicheritz-Ponten T."/>
            <person name="De Bellis G."/>
            <person name="Visca P."/>
            <person name="Cassone A."/>
            <person name="Carattoli A."/>
        </authorList>
    </citation>
    <scope>NUCLEOTIDE SEQUENCE [LARGE SCALE GENOMIC DNA]</scope>
    <source>
        <strain>ACICU</strain>
    </source>
</reference>
<name>MOBA_ACIBC</name>
<dbReference type="EC" id="2.7.7.77" evidence="1"/>
<dbReference type="EMBL" id="CP000863">
    <property type="protein sequence ID" value="ACC57439.1"/>
    <property type="molecule type" value="Genomic_DNA"/>
</dbReference>
<dbReference type="RefSeq" id="WP_001032654.1">
    <property type="nucleotide sequence ID" value="NZ_CP031380.1"/>
</dbReference>
<dbReference type="SMR" id="B2I3G6"/>
<dbReference type="KEGG" id="abc:ACICU_02127"/>
<dbReference type="HOGENOM" id="CLU_055597_5_1_6"/>
<dbReference type="Proteomes" id="UP000008839">
    <property type="component" value="Chromosome"/>
</dbReference>
<dbReference type="GO" id="GO:0005737">
    <property type="term" value="C:cytoplasm"/>
    <property type="evidence" value="ECO:0007669"/>
    <property type="project" value="UniProtKB-SubCell"/>
</dbReference>
<dbReference type="GO" id="GO:0005525">
    <property type="term" value="F:GTP binding"/>
    <property type="evidence" value="ECO:0007669"/>
    <property type="project" value="UniProtKB-UniRule"/>
</dbReference>
<dbReference type="GO" id="GO:0046872">
    <property type="term" value="F:metal ion binding"/>
    <property type="evidence" value="ECO:0007669"/>
    <property type="project" value="UniProtKB-KW"/>
</dbReference>
<dbReference type="GO" id="GO:0061603">
    <property type="term" value="F:molybdenum cofactor guanylyltransferase activity"/>
    <property type="evidence" value="ECO:0007669"/>
    <property type="project" value="UniProtKB-EC"/>
</dbReference>
<dbReference type="GO" id="GO:1902758">
    <property type="term" value="P:bis(molybdopterin guanine dinucleotide)molybdenum biosynthetic process"/>
    <property type="evidence" value="ECO:0007669"/>
    <property type="project" value="TreeGrafter"/>
</dbReference>
<dbReference type="CDD" id="cd02503">
    <property type="entry name" value="MobA"/>
    <property type="match status" value="1"/>
</dbReference>
<dbReference type="Gene3D" id="3.90.550.10">
    <property type="entry name" value="Spore Coat Polysaccharide Biosynthesis Protein SpsA, Chain A"/>
    <property type="match status" value="1"/>
</dbReference>
<dbReference type="HAMAP" id="MF_00316">
    <property type="entry name" value="MobA"/>
    <property type="match status" value="1"/>
</dbReference>
<dbReference type="InterPro" id="IPR025877">
    <property type="entry name" value="MobA-like_NTP_Trfase"/>
</dbReference>
<dbReference type="InterPro" id="IPR013482">
    <property type="entry name" value="Molybde_CF_guanTrfase"/>
</dbReference>
<dbReference type="InterPro" id="IPR029044">
    <property type="entry name" value="Nucleotide-diphossugar_trans"/>
</dbReference>
<dbReference type="PANTHER" id="PTHR19136">
    <property type="entry name" value="MOLYBDENUM COFACTOR GUANYLYLTRANSFERASE"/>
    <property type="match status" value="1"/>
</dbReference>
<dbReference type="PANTHER" id="PTHR19136:SF81">
    <property type="entry name" value="MOLYBDENUM COFACTOR GUANYLYLTRANSFERASE"/>
    <property type="match status" value="1"/>
</dbReference>
<dbReference type="Pfam" id="PF12804">
    <property type="entry name" value="NTP_transf_3"/>
    <property type="match status" value="1"/>
</dbReference>
<dbReference type="SUPFAM" id="SSF53448">
    <property type="entry name" value="Nucleotide-diphospho-sugar transferases"/>
    <property type="match status" value="1"/>
</dbReference>
<comment type="function">
    <text evidence="1">Transfers a GMP moiety from GTP to Mo-molybdopterin (Mo-MPT) cofactor (Moco or molybdenum cofactor) to form Mo-molybdopterin guanine dinucleotide (Mo-MGD) cofactor.</text>
</comment>
<comment type="catalytic activity">
    <reaction evidence="1">
        <text>Mo-molybdopterin + GTP + H(+) = Mo-molybdopterin guanine dinucleotide + diphosphate</text>
        <dbReference type="Rhea" id="RHEA:34243"/>
        <dbReference type="ChEBI" id="CHEBI:15378"/>
        <dbReference type="ChEBI" id="CHEBI:33019"/>
        <dbReference type="ChEBI" id="CHEBI:37565"/>
        <dbReference type="ChEBI" id="CHEBI:71302"/>
        <dbReference type="ChEBI" id="CHEBI:71310"/>
        <dbReference type="EC" id="2.7.7.77"/>
    </reaction>
</comment>
<comment type="cofactor">
    <cofactor evidence="1">
        <name>Mg(2+)</name>
        <dbReference type="ChEBI" id="CHEBI:18420"/>
    </cofactor>
</comment>
<comment type="subunit">
    <text evidence="1">Monomer.</text>
</comment>
<comment type="subcellular location">
    <subcellularLocation>
        <location evidence="1">Cytoplasm</location>
    </subcellularLocation>
</comment>
<comment type="domain">
    <text evidence="1">The N-terminal domain determines nucleotide recognition and specific binding, while the C-terminal domain determines the specific binding to the target protein.</text>
</comment>
<comment type="similarity">
    <text evidence="1">Belongs to the MobA family.</text>
</comment>
<accession>B2I3G6</accession>
<evidence type="ECO:0000255" key="1">
    <source>
        <dbReference type="HAMAP-Rule" id="MF_00316"/>
    </source>
</evidence>
<keyword id="KW-0963">Cytoplasm</keyword>
<keyword id="KW-0342">GTP-binding</keyword>
<keyword id="KW-0460">Magnesium</keyword>
<keyword id="KW-0479">Metal-binding</keyword>
<keyword id="KW-0501">Molybdenum cofactor biosynthesis</keyword>
<keyword id="KW-0547">Nucleotide-binding</keyword>
<keyword id="KW-0808">Transferase</keyword>
<proteinExistence type="inferred from homology"/>
<sequence length="209" mass="23919">MNKGYPITDLVILAGGQARRMNGLNKLLQQFDGDTQLLKIHQKLKSSVSEIWVNSHRDYSIYQSIVPDIKCFQDDASGFFGPLMGMKSAWSHVRADYVLFIPCDVTYIPTQVVAKLHSALRKNKQAQAAYVSINGDALYPFCLLKRESLEVLEQQIDKQQLSLKNCFKLLHAQVAIFQKQNLFFHSINSLDELQQYKQIKAFKEIFSTN</sequence>